<feature type="chain" id="PRO_0000362632" description="NADH-quinone oxidoreductase subunit A">
    <location>
        <begin position="1"/>
        <end position="146"/>
    </location>
</feature>
<feature type="transmembrane region" description="Helical" evidence="1">
    <location>
        <begin position="4"/>
        <end position="24"/>
    </location>
</feature>
<feature type="transmembrane region" description="Helical" evidence="1">
    <location>
        <begin position="63"/>
        <end position="83"/>
    </location>
</feature>
<feature type="transmembrane region" description="Helical" evidence="1">
    <location>
        <begin position="91"/>
        <end position="111"/>
    </location>
</feature>
<sequence length="146" mass="16940">MCDIYHWGLIAFIVGILFLCVFMLSCGYFLGGCSSSRSKNVPFESGIKSIGNARIQFSVKFYLIAMFFVIFDVEGIYVYAWAISVRDVGWIGFSEIFIFIFILLVSLIYLIRIGMFDWIEQSSRHVHCVDFFDIDTSRYLKKSNKR</sequence>
<organism>
    <name type="scientific">Blochmanniella pennsylvanica (strain BPEN)</name>
    <dbReference type="NCBI Taxonomy" id="291272"/>
    <lineage>
        <taxon>Bacteria</taxon>
        <taxon>Pseudomonadati</taxon>
        <taxon>Pseudomonadota</taxon>
        <taxon>Gammaproteobacteria</taxon>
        <taxon>Enterobacterales</taxon>
        <taxon>Enterobacteriaceae</taxon>
        <taxon>ant endosymbionts</taxon>
        <taxon>Candidatus Blochmanniella</taxon>
    </lineage>
</organism>
<reference key="1">
    <citation type="journal article" date="2005" name="Genome Res.">
        <title>Genome sequence of Blochmannia pennsylvanicus indicates parallel evolutionary trends among bacterial mutualists of insects.</title>
        <authorList>
            <person name="Degnan P.H."/>
            <person name="Lazarus A.B."/>
            <person name="Wernegreen J.J."/>
        </authorList>
    </citation>
    <scope>NUCLEOTIDE SEQUENCE [LARGE SCALE GENOMIC DNA]</scope>
    <source>
        <strain>BPEN</strain>
    </source>
</reference>
<dbReference type="EC" id="7.1.1.-" evidence="1"/>
<dbReference type="EMBL" id="CP000016">
    <property type="protein sequence ID" value="AAZ41123.1"/>
    <property type="molecule type" value="Genomic_DNA"/>
</dbReference>
<dbReference type="SMR" id="Q492H6"/>
<dbReference type="STRING" id="291272.BPEN_509"/>
<dbReference type="KEGG" id="bpn:BPEN_509"/>
<dbReference type="eggNOG" id="COG0838">
    <property type="taxonomic scope" value="Bacteria"/>
</dbReference>
<dbReference type="HOGENOM" id="CLU_119549_2_0_6"/>
<dbReference type="OrthoDB" id="9791970at2"/>
<dbReference type="Proteomes" id="UP000007794">
    <property type="component" value="Chromosome"/>
</dbReference>
<dbReference type="GO" id="GO:0030964">
    <property type="term" value="C:NADH dehydrogenase complex"/>
    <property type="evidence" value="ECO:0007669"/>
    <property type="project" value="TreeGrafter"/>
</dbReference>
<dbReference type="GO" id="GO:0005886">
    <property type="term" value="C:plasma membrane"/>
    <property type="evidence" value="ECO:0007669"/>
    <property type="project" value="UniProtKB-SubCell"/>
</dbReference>
<dbReference type="GO" id="GO:0008137">
    <property type="term" value="F:NADH dehydrogenase (ubiquinone) activity"/>
    <property type="evidence" value="ECO:0007669"/>
    <property type="project" value="InterPro"/>
</dbReference>
<dbReference type="GO" id="GO:0050136">
    <property type="term" value="F:NADH:ubiquinone reductase (non-electrogenic) activity"/>
    <property type="evidence" value="ECO:0007669"/>
    <property type="project" value="UniProtKB-UniRule"/>
</dbReference>
<dbReference type="GO" id="GO:0048038">
    <property type="term" value="F:quinone binding"/>
    <property type="evidence" value="ECO:0007669"/>
    <property type="project" value="UniProtKB-KW"/>
</dbReference>
<dbReference type="Gene3D" id="1.20.58.1610">
    <property type="entry name" value="NADH:ubiquinone/plastoquinone oxidoreductase, chain 3"/>
    <property type="match status" value="1"/>
</dbReference>
<dbReference type="HAMAP" id="MF_01394">
    <property type="entry name" value="NDH1_NuoA"/>
    <property type="match status" value="1"/>
</dbReference>
<dbReference type="InterPro" id="IPR023043">
    <property type="entry name" value="NAD(P)H_OxRDtase_bac/plastid"/>
</dbReference>
<dbReference type="InterPro" id="IPR000440">
    <property type="entry name" value="NADH_UbQ/plastoQ_OxRdtase_su3"/>
</dbReference>
<dbReference type="InterPro" id="IPR038430">
    <property type="entry name" value="NDAH_ubi_oxred_su3_sf"/>
</dbReference>
<dbReference type="PANTHER" id="PTHR11058:SF21">
    <property type="entry name" value="NADH-QUINONE OXIDOREDUCTASE SUBUNIT A"/>
    <property type="match status" value="1"/>
</dbReference>
<dbReference type="PANTHER" id="PTHR11058">
    <property type="entry name" value="NADH-UBIQUINONE OXIDOREDUCTASE CHAIN 3"/>
    <property type="match status" value="1"/>
</dbReference>
<dbReference type="Pfam" id="PF00507">
    <property type="entry name" value="Oxidored_q4"/>
    <property type="match status" value="1"/>
</dbReference>
<comment type="function">
    <text evidence="1">NDH-1 shuttles electrons from NADH, via FMN and iron-sulfur (Fe-S) centers, to quinones in the respiratory chain. The immediate electron acceptor for the enzyme in this species is believed to be ubiquinone. Couples the redox reaction to proton translocation (for every two electrons transferred, four hydrogen ions are translocated across the cytoplasmic membrane), and thus conserves the redox energy in a proton gradient.</text>
</comment>
<comment type="catalytic activity">
    <reaction evidence="1">
        <text>a quinone + NADH + 5 H(+)(in) = a quinol + NAD(+) + 4 H(+)(out)</text>
        <dbReference type="Rhea" id="RHEA:57888"/>
        <dbReference type="ChEBI" id="CHEBI:15378"/>
        <dbReference type="ChEBI" id="CHEBI:24646"/>
        <dbReference type="ChEBI" id="CHEBI:57540"/>
        <dbReference type="ChEBI" id="CHEBI:57945"/>
        <dbReference type="ChEBI" id="CHEBI:132124"/>
    </reaction>
</comment>
<comment type="subunit">
    <text evidence="1">NDH-1 is composed of 13 different subunits. Subunits NuoA, H, J, K, L, M, N constitute the membrane sector of the complex.</text>
</comment>
<comment type="subcellular location">
    <subcellularLocation>
        <location evidence="1">Cell inner membrane</location>
        <topology evidence="1">Multi-pass membrane protein</topology>
    </subcellularLocation>
</comment>
<comment type="similarity">
    <text evidence="1">Belongs to the complex I subunit 3 family.</text>
</comment>
<protein>
    <recommendedName>
        <fullName evidence="1">NADH-quinone oxidoreductase subunit A</fullName>
        <ecNumber evidence="1">7.1.1.-</ecNumber>
    </recommendedName>
    <alternativeName>
        <fullName evidence="1">NADH dehydrogenase I subunit A</fullName>
    </alternativeName>
    <alternativeName>
        <fullName evidence="1">NDH-1 subunit A</fullName>
    </alternativeName>
    <alternativeName>
        <fullName evidence="1">NUO1</fullName>
    </alternativeName>
</protein>
<name>NUOA_BLOPB</name>
<accession>Q492H6</accession>
<keyword id="KW-0997">Cell inner membrane</keyword>
<keyword id="KW-1003">Cell membrane</keyword>
<keyword id="KW-0472">Membrane</keyword>
<keyword id="KW-0520">NAD</keyword>
<keyword id="KW-0874">Quinone</keyword>
<keyword id="KW-1185">Reference proteome</keyword>
<keyword id="KW-1278">Translocase</keyword>
<keyword id="KW-0812">Transmembrane</keyword>
<keyword id="KW-1133">Transmembrane helix</keyword>
<keyword id="KW-0813">Transport</keyword>
<keyword id="KW-0830">Ubiquinone</keyword>
<evidence type="ECO:0000255" key="1">
    <source>
        <dbReference type="HAMAP-Rule" id="MF_01394"/>
    </source>
</evidence>
<gene>
    <name evidence="1" type="primary">nuoA</name>
    <name type="ordered locus">BPEN_509</name>
</gene>
<proteinExistence type="inferred from homology"/>